<evidence type="ECO:0000255" key="1">
    <source>
        <dbReference type="HAMAP-Rule" id="MF_01288"/>
    </source>
</evidence>
<sequence>MTLPKIKHVRAWFIGGATAEKGAGGGDYHDQGGNHWIDDHIATPMSKYRDYEQSRQSFGINVLGTLIVEVEAENGQTGFAVSTAGEMGCFIVEKHLNRFIEGKCVSDIKLIHDQMLGATMYYSGSGGLVMNTISCVDLALWDLFGKVVGLPVYKLLGGAVRDEIQFYATGARPDLAKEMGFIGGKMPTHWGPHDGDAGIRKDAAMVADMREKCGPDFWLMLDCWMSQDVNYATKLAHACAPFNLKWIEECLPPQQYEGYRELKRNAPAGMMVTSGEHHGTLQSFRTLAETGIDIMQPDVGWCGGLTTLVEIAALAKSRGQLVVPHGSSVYSHHAVITFTNTPFSEFLMTSPDCSTLRPQFDPILLDEPVPVNGRIHKSVLDKPGFGVELNRDCHLKRPYSH</sequence>
<dbReference type="EC" id="4.2.1.90" evidence="1"/>
<dbReference type="EMBL" id="CP001113">
    <property type="protein sequence ID" value="ACF61484.1"/>
    <property type="molecule type" value="Genomic_DNA"/>
</dbReference>
<dbReference type="RefSeq" id="WP_001530644.1">
    <property type="nucleotide sequence ID" value="NZ_CCMR01000001.1"/>
</dbReference>
<dbReference type="SMR" id="B4SYW3"/>
<dbReference type="KEGG" id="see:SNSL254_A2476"/>
<dbReference type="HOGENOM" id="CLU_030273_1_0_6"/>
<dbReference type="Proteomes" id="UP000008824">
    <property type="component" value="Chromosome"/>
</dbReference>
<dbReference type="GO" id="GO:0050032">
    <property type="term" value="F:L-rhamnonate dehydratase activity"/>
    <property type="evidence" value="ECO:0007669"/>
    <property type="project" value="UniProtKB-UniRule"/>
</dbReference>
<dbReference type="GO" id="GO:0000287">
    <property type="term" value="F:magnesium ion binding"/>
    <property type="evidence" value="ECO:0007669"/>
    <property type="project" value="UniProtKB-UniRule"/>
</dbReference>
<dbReference type="GO" id="GO:0009063">
    <property type="term" value="P:amino acid catabolic process"/>
    <property type="evidence" value="ECO:0007669"/>
    <property type="project" value="InterPro"/>
</dbReference>
<dbReference type="GO" id="GO:0016052">
    <property type="term" value="P:carbohydrate catabolic process"/>
    <property type="evidence" value="ECO:0007669"/>
    <property type="project" value="TreeGrafter"/>
</dbReference>
<dbReference type="CDD" id="cd03327">
    <property type="entry name" value="MR_like_2"/>
    <property type="match status" value="1"/>
</dbReference>
<dbReference type="FunFam" id="3.30.390.10:FF:000007">
    <property type="entry name" value="L-rhamnonate dehydratase"/>
    <property type="match status" value="1"/>
</dbReference>
<dbReference type="FunFam" id="3.20.20.120:FF:000005">
    <property type="entry name" value="Putative L-rhamnonate dehydratase"/>
    <property type="match status" value="1"/>
</dbReference>
<dbReference type="Gene3D" id="3.20.20.120">
    <property type="entry name" value="Enolase-like C-terminal domain"/>
    <property type="match status" value="1"/>
</dbReference>
<dbReference type="Gene3D" id="3.30.390.10">
    <property type="entry name" value="Enolase-like, N-terminal domain"/>
    <property type="match status" value="1"/>
</dbReference>
<dbReference type="HAMAP" id="MF_01288">
    <property type="entry name" value="Rhamnon_dehydrat"/>
    <property type="match status" value="1"/>
</dbReference>
<dbReference type="InterPro" id="IPR036849">
    <property type="entry name" value="Enolase-like_C_sf"/>
</dbReference>
<dbReference type="InterPro" id="IPR029017">
    <property type="entry name" value="Enolase-like_N"/>
</dbReference>
<dbReference type="InterPro" id="IPR029065">
    <property type="entry name" value="Enolase_C-like"/>
</dbReference>
<dbReference type="InterPro" id="IPR023444">
    <property type="entry name" value="L-Rhamnon_dehydrat"/>
</dbReference>
<dbReference type="InterPro" id="IPR018110">
    <property type="entry name" value="Mandel_Rmase/mucon_lact_enz_CS"/>
</dbReference>
<dbReference type="InterPro" id="IPR013342">
    <property type="entry name" value="Mandelate_racemase_C"/>
</dbReference>
<dbReference type="InterPro" id="IPR013341">
    <property type="entry name" value="Mandelate_racemase_N_dom"/>
</dbReference>
<dbReference type="InterPro" id="IPR046945">
    <property type="entry name" value="RHMD-like"/>
</dbReference>
<dbReference type="NCBIfam" id="NF011968">
    <property type="entry name" value="PRK15440.1"/>
    <property type="match status" value="1"/>
</dbReference>
<dbReference type="PANTHER" id="PTHR13794">
    <property type="entry name" value="ENOLASE SUPERFAMILY, MANDELATE RACEMASE"/>
    <property type="match status" value="1"/>
</dbReference>
<dbReference type="PANTHER" id="PTHR13794:SF58">
    <property type="entry name" value="MITOCHONDRIAL ENOLASE SUPERFAMILY MEMBER 1"/>
    <property type="match status" value="1"/>
</dbReference>
<dbReference type="Pfam" id="PF13378">
    <property type="entry name" value="MR_MLE_C"/>
    <property type="match status" value="1"/>
</dbReference>
<dbReference type="Pfam" id="PF02746">
    <property type="entry name" value="MR_MLE_N"/>
    <property type="match status" value="1"/>
</dbReference>
<dbReference type="SFLD" id="SFLDG00179">
    <property type="entry name" value="mandelate_racemase"/>
    <property type="match status" value="1"/>
</dbReference>
<dbReference type="SFLD" id="SFLDF00006">
    <property type="entry name" value="rhamnonate_dehydratase"/>
    <property type="match status" value="1"/>
</dbReference>
<dbReference type="SMART" id="SM00922">
    <property type="entry name" value="MR_MLE"/>
    <property type="match status" value="1"/>
</dbReference>
<dbReference type="SUPFAM" id="SSF51604">
    <property type="entry name" value="Enolase C-terminal domain-like"/>
    <property type="match status" value="1"/>
</dbReference>
<dbReference type="SUPFAM" id="SSF54826">
    <property type="entry name" value="Enolase N-terminal domain-like"/>
    <property type="match status" value="1"/>
</dbReference>
<dbReference type="PROSITE" id="PS00908">
    <property type="entry name" value="MR_MLE_1"/>
    <property type="match status" value="1"/>
</dbReference>
<reference key="1">
    <citation type="journal article" date="2011" name="J. Bacteriol.">
        <title>Comparative genomics of 28 Salmonella enterica isolates: evidence for CRISPR-mediated adaptive sublineage evolution.</title>
        <authorList>
            <person name="Fricke W.F."/>
            <person name="Mammel M.K."/>
            <person name="McDermott P.F."/>
            <person name="Tartera C."/>
            <person name="White D.G."/>
            <person name="Leclerc J.E."/>
            <person name="Ravel J."/>
            <person name="Cebula T.A."/>
        </authorList>
    </citation>
    <scope>NUCLEOTIDE SEQUENCE [LARGE SCALE GENOMIC DNA]</scope>
    <source>
        <strain>SL254</strain>
    </source>
</reference>
<feature type="chain" id="PRO_1000165265" description="L-rhamnonate dehydratase">
    <location>
        <begin position="1"/>
        <end position="401"/>
    </location>
</feature>
<feature type="active site" description="Proton acceptor" evidence="1">
    <location>
        <position position="325"/>
    </location>
</feature>
<feature type="binding site" evidence="1">
    <location>
        <position position="29"/>
    </location>
    <ligand>
        <name>substrate</name>
    </ligand>
</feature>
<feature type="binding site" evidence="1">
    <location>
        <position position="55"/>
    </location>
    <ligand>
        <name>substrate</name>
    </ligand>
</feature>
<feature type="binding site" evidence="1">
    <location>
        <position position="222"/>
    </location>
    <ligand>
        <name>Mg(2+)</name>
        <dbReference type="ChEBI" id="CHEBI:18420"/>
    </ligand>
</feature>
<feature type="binding site" evidence="1">
    <location>
        <position position="248"/>
    </location>
    <ligand>
        <name>Mg(2+)</name>
        <dbReference type="ChEBI" id="CHEBI:18420"/>
    </ligand>
</feature>
<feature type="binding site" evidence="1">
    <location>
        <position position="276"/>
    </location>
    <ligand>
        <name>Mg(2+)</name>
        <dbReference type="ChEBI" id="CHEBI:18420"/>
    </ligand>
</feature>
<feature type="binding site" evidence="1">
    <location>
        <position position="345"/>
    </location>
    <ligand>
        <name>substrate</name>
    </ligand>
</feature>
<feature type="site" description="Increases basicity of active site His" evidence="1">
    <location>
        <position position="298"/>
    </location>
</feature>
<feature type="site" description="Transition state stabilizer" evidence="1">
    <location>
        <position position="345"/>
    </location>
</feature>
<accession>B4SYW3</accession>
<gene>
    <name evidence="1" type="primary">rhmD</name>
    <name type="ordered locus">SNSL254_A2476</name>
</gene>
<proteinExistence type="inferred from homology"/>
<organism>
    <name type="scientific">Salmonella newport (strain SL254)</name>
    <dbReference type="NCBI Taxonomy" id="423368"/>
    <lineage>
        <taxon>Bacteria</taxon>
        <taxon>Pseudomonadati</taxon>
        <taxon>Pseudomonadota</taxon>
        <taxon>Gammaproteobacteria</taxon>
        <taxon>Enterobacterales</taxon>
        <taxon>Enterobacteriaceae</taxon>
        <taxon>Salmonella</taxon>
    </lineage>
</organism>
<comment type="function">
    <text evidence="1">Catalyzes the dehydration of L-rhamnonate to 2-keto-3-deoxy-L-rhamnonate (KDR).</text>
</comment>
<comment type="catalytic activity">
    <reaction evidence="1">
        <text>L-rhamnonate = 2-dehydro-3-deoxy-L-rhamnonate + H2O</text>
        <dbReference type="Rhea" id="RHEA:23080"/>
        <dbReference type="ChEBI" id="CHEBI:15377"/>
        <dbReference type="ChEBI" id="CHEBI:58118"/>
        <dbReference type="ChEBI" id="CHEBI:58371"/>
        <dbReference type="EC" id="4.2.1.90"/>
    </reaction>
</comment>
<comment type="cofactor">
    <cofactor evidence="1">
        <name>Mg(2+)</name>
        <dbReference type="ChEBI" id="CHEBI:18420"/>
    </cofactor>
    <text evidence="1">Binds 1 Mg(2+) ion per subunit.</text>
</comment>
<comment type="subunit">
    <text evidence="1">Homooctamer; tetramer of dimers.</text>
</comment>
<comment type="miscellaneous">
    <text evidence="1">Reaction proceeds via a syn dehydration.</text>
</comment>
<comment type="similarity">
    <text evidence="1">Belongs to the mandelate racemase/muconate lactonizing enzyme family. RhamD subfamily.</text>
</comment>
<name>RHMD_SALNS</name>
<keyword id="KW-0456">Lyase</keyword>
<keyword id="KW-0460">Magnesium</keyword>
<keyword id="KW-0479">Metal-binding</keyword>
<protein>
    <recommendedName>
        <fullName evidence="1">L-rhamnonate dehydratase</fullName>
        <shortName evidence="1">RhamD</shortName>
        <ecNumber evidence="1">4.2.1.90</ecNumber>
    </recommendedName>
</protein>